<feature type="chain" id="PRO_0000081033" description="Virulence factors putative positive transcription regulator BvgA">
    <location>
        <begin position="1"/>
        <end position="209"/>
    </location>
</feature>
<feature type="domain" description="Response regulatory" evidence="2">
    <location>
        <begin position="4"/>
        <end position="119"/>
    </location>
</feature>
<feature type="domain" description="HTH luxR-type" evidence="3">
    <location>
        <begin position="142"/>
        <end position="207"/>
    </location>
</feature>
<feature type="DNA-binding region" description="H-T-H motif" evidence="3">
    <location>
        <begin position="166"/>
        <end position="185"/>
    </location>
</feature>
<feature type="modified residue" description="4-aspartylphosphate" evidence="2">
    <location>
        <position position="54"/>
    </location>
</feature>
<comment type="function">
    <text>Member of the two-component regulatory system BvgS/BvgA. Activates the transcription of virulence genes.</text>
</comment>
<comment type="subunit">
    <text evidence="1">Homodimer.</text>
</comment>
<comment type="PTM">
    <text evidence="1">Phosphorylated by BvgS.</text>
</comment>
<comment type="sequence caution" evidence="4">
    <conflict type="erroneous initiation">
        <sequence resource="EMBL-CDS" id="CAE38318"/>
    </conflict>
</comment>
<name>BVGA_BORPA</name>
<dbReference type="EMBL" id="X52948">
    <property type="protein sequence ID" value="CAA37123.1"/>
    <property type="molecule type" value="Genomic_DNA"/>
</dbReference>
<dbReference type="EMBL" id="BX640432">
    <property type="protein sequence ID" value="CAE38318.1"/>
    <property type="status" value="ALT_INIT"/>
    <property type="molecule type" value="Genomic_DNA"/>
</dbReference>
<dbReference type="PIR" id="S17945">
    <property type="entry name" value="S17945"/>
</dbReference>
<dbReference type="RefSeq" id="WP_010930609.1">
    <property type="nucleotide sequence ID" value="NC_002928.3"/>
</dbReference>
<dbReference type="SMR" id="P0A4H4"/>
<dbReference type="GeneID" id="93204813"/>
<dbReference type="KEGG" id="bpa:BPP3028"/>
<dbReference type="HOGENOM" id="CLU_000445_90_1_4"/>
<dbReference type="Proteomes" id="UP000001421">
    <property type="component" value="Chromosome"/>
</dbReference>
<dbReference type="GO" id="GO:0003677">
    <property type="term" value="F:DNA binding"/>
    <property type="evidence" value="ECO:0007669"/>
    <property type="project" value="UniProtKB-KW"/>
</dbReference>
<dbReference type="GO" id="GO:0000160">
    <property type="term" value="P:phosphorelay signal transduction system"/>
    <property type="evidence" value="ECO:0007669"/>
    <property type="project" value="UniProtKB-KW"/>
</dbReference>
<dbReference type="GO" id="GO:0006355">
    <property type="term" value="P:regulation of DNA-templated transcription"/>
    <property type="evidence" value="ECO:0007669"/>
    <property type="project" value="InterPro"/>
</dbReference>
<dbReference type="CDD" id="cd06170">
    <property type="entry name" value="LuxR_C_like"/>
    <property type="match status" value="1"/>
</dbReference>
<dbReference type="CDD" id="cd17535">
    <property type="entry name" value="REC_NarL-like"/>
    <property type="match status" value="1"/>
</dbReference>
<dbReference type="Gene3D" id="3.40.50.2300">
    <property type="match status" value="1"/>
</dbReference>
<dbReference type="InterPro" id="IPR011006">
    <property type="entry name" value="CheY-like_superfamily"/>
</dbReference>
<dbReference type="InterPro" id="IPR001789">
    <property type="entry name" value="Sig_transdc_resp-reg_receiver"/>
</dbReference>
<dbReference type="InterPro" id="IPR000792">
    <property type="entry name" value="Tscrpt_reg_LuxR_C"/>
</dbReference>
<dbReference type="InterPro" id="IPR039420">
    <property type="entry name" value="WalR-like"/>
</dbReference>
<dbReference type="PANTHER" id="PTHR43214:SF41">
    <property type="entry name" value="NITRATE_NITRITE RESPONSE REGULATOR PROTEIN NARP"/>
    <property type="match status" value="1"/>
</dbReference>
<dbReference type="PANTHER" id="PTHR43214">
    <property type="entry name" value="TWO-COMPONENT RESPONSE REGULATOR"/>
    <property type="match status" value="1"/>
</dbReference>
<dbReference type="Pfam" id="PF00196">
    <property type="entry name" value="GerE"/>
    <property type="match status" value="1"/>
</dbReference>
<dbReference type="Pfam" id="PF00072">
    <property type="entry name" value="Response_reg"/>
    <property type="match status" value="1"/>
</dbReference>
<dbReference type="PRINTS" id="PR00038">
    <property type="entry name" value="HTHLUXR"/>
</dbReference>
<dbReference type="SMART" id="SM00421">
    <property type="entry name" value="HTH_LUXR"/>
    <property type="match status" value="1"/>
</dbReference>
<dbReference type="SMART" id="SM00448">
    <property type="entry name" value="REC"/>
    <property type="match status" value="1"/>
</dbReference>
<dbReference type="SUPFAM" id="SSF52172">
    <property type="entry name" value="CheY-like"/>
    <property type="match status" value="1"/>
</dbReference>
<dbReference type="PROSITE" id="PS00622">
    <property type="entry name" value="HTH_LUXR_1"/>
    <property type="match status" value="1"/>
</dbReference>
<dbReference type="PROSITE" id="PS50043">
    <property type="entry name" value="HTH_LUXR_2"/>
    <property type="match status" value="1"/>
</dbReference>
<dbReference type="PROSITE" id="PS50110">
    <property type="entry name" value="RESPONSE_REGULATORY"/>
    <property type="match status" value="1"/>
</dbReference>
<sequence>MYNKVLIIDDHPVLRFAVRVLMEKEGFEVIGETDNGIDGLKIAREKIPNLVVLDIGIPKLDGLEVIARLQSLGLPLRVLVLTGQPPSLFARRCLNSGAAGFVCKHENLHEVINAAKAVMAGYTYFPSTTLSEMRMGDNAKSDSTLISVLSNRELTVLQLLAQGMSNKDIADSMFLSNKTVSTYKTRLLQKLNATSLVELIDLAKRNNLA</sequence>
<protein>
    <recommendedName>
        <fullName>Virulence factors putative positive transcription regulator BvgA</fullName>
    </recommendedName>
</protein>
<gene>
    <name type="primary">bvgA</name>
    <name type="ordered locus">BPP3028</name>
</gene>
<accession>P0A4H4</accession>
<accession>P16574</accession>
<proteinExistence type="inferred from homology"/>
<organism>
    <name type="scientific">Bordetella parapertussis (strain 12822 / ATCC BAA-587 / NCTC 13253)</name>
    <dbReference type="NCBI Taxonomy" id="257311"/>
    <lineage>
        <taxon>Bacteria</taxon>
        <taxon>Pseudomonadati</taxon>
        <taxon>Pseudomonadota</taxon>
        <taxon>Betaproteobacteria</taxon>
        <taxon>Burkholderiales</taxon>
        <taxon>Alcaligenaceae</taxon>
        <taxon>Bordetella</taxon>
    </lineage>
</organism>
<keyword id="KW-0010">Activator</keyword>
<keyword id="KW-0238">DNA-binding</keyword>
<keyword id="KW-0597">Phosphoprotein</keyword>
<keyword id="KW-0804">Transcription</keyword>
<keyword id="KW-0805">Transcription regulation</keyword>
<keyword id="KW-0902">Two-component regulatory system</keyword>
<keyword id="KW-0843">Virulence</keyword>
<evidence type="ECO:0000250" key="1"/>
<evidence type="ECO:0000255" key="2">
    <source>
        <dbReference type="PROSITE-ProRule" id="PRU00169"/>
    </source>
</evidence>
<evidence type="ECO:0000255" key="3">
    <source>
        <dbReference type="PROSITE-ProRule" id="PRU00411"/>
    </source>
</evidence>
<evidence type="ECO:0000305" key="4"/>
<reference key="1">
    <citation type="journal article" date="1991" name="Mol. Microbiol.">
        <title>Structural and genetic analysis of the bvg locus in Bordetella species.</title>
        <authorList>
            <person name="Arico B."/>
            <person name="Scarlato V."/>
            <person name="Monack D.M."/>
            <person name="Falkow S."/>
            <person name="Rappuoli R."/>
        </authorList>
    </citation>
    <scope>NUCLEOTIDE SEQUENCE [GENOMIC DNA]</scope>
    <source>
        <strain>ATCC 9305</strain>
    </source>
</reference>
<reference key="2">
    <citation type="journal article" date="2003" name="Nat. Genet.">
        <title>Comparative analysis of the genome sequences of Bordetella pertussis, Bordetella parapertussis and Bordetella bronchiseptica.</title>
        <authorList>
            <person name="Parkhill J."/>
            <person name="Sebaihia M."/>
            <person name="Preston A."/>
            <person name="Murphy L.D."/>
            <person name="Thomson N.R."/>
            <person name="Harris D.E."/>
            <person name="Holden M.T.G."/>
            <person name="Churcher C.M."/>
            <person name="Bentley S.D."/>
            <person name="Mungall K.L."/>
            <person name="Cerdeno-Tarraga A.-M."/>
            <person name="Temple L."/>
            <person name="James K.D."/>
            <person name="Harris B."/>
            <person name="Quail M.A."/>
            <person name="Achtman M."/>
            <person name="Atkin R."/>
            <person name="Baker S."/>
            <person name="Basham D."/>
            <person name="Bason N."/>
            <person name="Cherevach I."/>
            <person name="Chillingworth T."/>
            <person name="Collins M."/>
            <person name="Cronin A."/>
            <person name="Davis P."/>
            <person name="Doggett J."/>
            <person name="Feltwell T."/>
            <person name="Goble A."/>
            <person name="Hamlin N."/>
            <person name="Hauser H."/>
            <person name="Holroyd S."/>
            <person name="Jagels K."/>
            <person name="Leather S."/>
            <person name="Moule S."/>
            <person name="Norberczak H."/>
            <person name="O'Neil S."/>
            <person name="Ormond D."/>
            <person name="Price C."/>
            <person name="Rabbinowitsch E."/>
            <person name="Rutter S."/>
            <person name="Sanders M."/>
            <person name="Saunders D."/>
            <person name="Seeger K."/>
            <person name="Sharp S."/>
            <person name="Simmonds M."/>
            <person name="Skelton J."/>
            <person name="Squares R."/>
            <person name="Squares S."/>
            <person name="Stevens K."/>
            <person name="Unwin L."/>
            <person name="Whitehead S."/>
            <person name="Barrell B.G."/>
            <person name="Maskell D.J."/>
        </authorList>
    </citation>
    <scope>NUCLEOTIDE SEQUENCE [LARGE SCALE GENOMIC DNA]</scope>
    <source>
        <strain>12822 / ATCC BAA-587 / NCTC 13253</strain>
    </source>
</reference>
<reference key="3">
    <citation type="journal article" date="1991" name="Mol. Microbiol.">
        <title>The bvg-dependent promoters show similar behaviour in different Bordetella species and share sequence homologies.</title>
        <authorList>
            <person name="Scarlato V."/>
            <person name="Prugnola A."/>
            <person name="Arico B."/>
            <person name="Rappuoli R."/>
        </authorList>
    </citation>
    <scope>NUCLEOTIDE SEQUENCE [GENOMIC DNA] OF 1-20</scope>
</reference>